<proteinExistence type="inferred from homology"/>
<protein>
    <recommendedName>
        <fullName evidence="1">GTPase Era</fullName>
    </recommendedName>
</protein>
<name>ERA_LACH4</name>
<keyword id="KW-1003">Cell membrane</keyword>
<keyword id="KW-0963">Cytoplasm</keyword>
<keyword id="KW-0342">GTP-binding</keyword>
<keyword id="KW-0472">Membrane</keyword>
<keyword id="KW-0547">Nucleotide-binding</keyword>
<keyword id="KW-0690">Ribosome biogenesis</keyword>
<keyword id="KW-0694">RNA-binding</keyword>
<keyword id="KW-0699">rRNA-binding</keyword>
<organism>
    <name type="scientific">Lactobacillus helveticus (strain DPC 4571)</name>
    <dbReference type="NCBI Taxonomy" id="405566"/>
    <lineage>
        <taxon>Bacteria</taxon>
        <taxon>Bacillati</taxon>
        <taxon>Bacillota</taxon>
        <taxon>Bacilli</taxon>
        <taxon>Lactobacillales</taxon>
        <taxon>Lactobacillaceae</taxon>
        <taxon>Lactobacillus</taxon>
    </lineage>
</organism>
<feature type="chain" id="PRO_1000189965" description="GTPase Era">
    <location>
        <begin position="1"/>
        <end position="301"/>
    </location>
</feature>
<feature type="domain" description="Era-type G" evidence="2">
    <location>
        <begin position="7"/>
        <end position="173"/>
    </location>
</feature>
<feature type="domain" description="KH type-2" evidence="1">
    <location>
        <begin position="204"/>
        <end position="281"/>
    </location>
</feature>
<feature type="region of interest" description="G1" evidence="2">
    <location>
        <begin position="15"/>
        <end position="22"/>
    </location>
</feature>
<feature type="region of interest" description="G2" evidence="2">
    <location>
        <begin position="41"/>
        <end position="45"/>
    </location>
</feature>
<feature type="region of interest" description="G3" evidence="2">
    <location>
        <begin position="62"/>
        <end position="65"/>
    </location>
</feature>
<feature type="region of interest" description="G4" evidence="2">
    <location>
        <begin position="123"/>
        <end position="126"/>
    </location>
</feature>
<feature type="region of interest" description="G5" evidence="2">
    <location>
        <begin position="152"/>
        <end position="154"/>
    </location>
</feature>
<feature type="binding site" evidence="1">
    <location>
        <begin position="15"/>
        <end position="22"/>
    </location>
    <ligand>
        <name>GTP</name>
        <dbReference type="ChEBI" id="CHEBI:37565"/>
    </ligand>
</feature>
<feature type="binding site" evidence="1">
    <location>
        <begin position="62"/>
        <end position="66"/>
    </location>
    <ligand>
        <name>GTP</name>
        <dbReference type="ChEBI" id="CHEBI:37565"/>
    </ligand>
</feature>
<feature type="binding site" evidence="1">
    <location>
        <begin position="123"/>
        <end position="126"/>
    </location>
    <ligand>
        <name>GTP</name>
        <dbReference type="ChEBI" id="CHEBI:37565"/>
    </ligand>
</feature>
<accession>A8YVM7</accession>
<reference key="1">
    <citation type="journal article" date="2008" name="J. Bacteriol.">
        <title>Genome sequence of Lactobacillus helveticus: an organism distinguished by selective gene loss and IS element expansion.</title>
        <authorList>
            <person name="Callanan M."/>
            <person name="Kaleta P."/>
            <person name="O'Callaghan J."/>
            <person name="O'Sullivan O."/>
            <person name="Jordan K."/>
            <person name="McAuliffe O."/>
            <person name="Sangrador-Vegas A."/>
            <person name="Slattery L."/>
            <person name="Fitzgerald G.F."/>
            <person name="Beresford T."/>
            <person name="Ross R.P."/>
        </authorList>
    </citation>
    <scope>NUCLEOTIDE SEQUENCE [LARGE SCALE GENOMIC DNA]</scope>
    <source>
        <strain>DPC 4571</strain>
    </source>
</reference>
<gene>
    <name evidence="1" type="primary">era</name>
    <name type="ordered locus">lhv_1301</name>
</gene>
<evidence type="ECO:0000255" key="1">
    <source>
        <dbReference type="HAMAP-Rule" id="MF_00367"/>
    </source>
</evidence>
<evidence type="ECO:0000255" key="2">
    <source>
        <dbReference type="PROSITE-ProRule" id="PRU01050"/>
    </source>
</evidence>
<comment type="function">
    <text evidence="1">An essential GTPase that binds both GDP and GTP, with rapid nucleotide exchange. Plays a role in 16S rRNA processing and 30S ribosomal subunit biogenesis and possibly also in cell cycle regulation and energy metabolism.</text>
</comment>
<comment type="subunit">
    <text evidence="1">Monomer.</text>
</comment>
<comment type="subcellular location">
    <subcellularLocation>
        <location>Cytoplasm</location>
    </subcellularLocation>
    <subcellularLocation>
        <location evidence="1">Cell membrane</location>
        <topology evidence="1">Peripheral membrane protein</topology>
    </subcellularLocation>
</comment>
<comment type="similarity">
    <text evidence="1 2">Belongs to the TRAFAC class TrmE-Era-EngA-EngB-Septin-like GTPase superfamily. Era GTPase family.</text>
</comment>
<sequence>MEEKEFKSGFVALLGRPNVGKSTLMNYLVGQKVAITSNKPQTTRNRISGIYTSDKMQVVFVDTPGIFKPHSKLDDYMDKASLSSLNDVDLVLFMVEPEEIGKGDQYIANLLKEVKVPVFLVINKVDQIHPNKLLLIMDSYHKLEGFKEILPISATQGIGIEDLLNTINKYLPEGPQYYGADQITDRPEYFVVAELIREQILRLTSQEVPHATAVAVDQMNKHQNGKLLIEATIYVEKDGQKGIIIGKGGKMLKQIGINSRKEIEHLLGEKVNLRLWVKVQHNWRSDPSFLKQIGYDKKELS</sequence>
<dbReference type="EMBL" id="CP000517">
    <property type="protein sequence ID" value="ABX27314.1"/>
    <property type="molecule type" value="Genomic_DNA"/>
</dbReference>
<dbReference type="RefSeq" id="WP_012211976.1">
    <property type="nucleotide sequence ID" value="NC_010080.1"/>
</dbReference>
<dbReference type="SMR" id="A8YVM7"/>
<dbReference type="KEGG" id="lhe:lhv_1301"/>
<dbReference type="eggNOG" id="COG1159">
    <property type="taxonomic scope" value="Bacteria"/>
</dbReference>
<dbReference type="HOGENOM" id="CLU_038009_1_0_9"/>
<dbReference type="Proteomes" id="UP000000790">
    <property type="component" value="Chromosome"/>
</dbReference>
<dbReference type="GO" id="GO:0005829">
    <property type="term" value="C:cytosol"/>
    <property type="evidence" value="ECO:0007669"/>
    <property type="project" value="TreeGrafter"/>
</dbReference>
<dbReference type="GO" id="GO:0005886">
    <property type="term" value="C:plasma membrane"/>
    <property type="evidence" value="ECO:0007669"/>
    <property type="project" value="UniProtKB-SubCell"/>
</dbReference>
<dbReference type="GO" id="GO:0005525">
    <property type="term" value="F:GTP binding"/>
    <property type="evidence" value="ECO:0007669"/>
    <property type="project" value="UniProtKB-UniRule"/>
</dbReference>
<dbReference type="GO" id="GO:0003924">
    <property type="term" value="F:GTPase activity"/>
    <property type="evidence" value="ECO:0007669"/>
    <property type="project" value="UniProtKB-UniRule"/>
</dbReference>
<dbReference type="GO" id="GO:0043024">
    <property type="term" value="F:ribosomal small subunit binding"/>
    <property type="evidence" value="ECO:0007669"/>
    <property type="project" value="TreeGrafter"/>
</dbReference>
<dbReference type="GO" id="GO:0070181">
    <property type="term" value="F:small ribosomal subunit rRNA binding"/>
    <property type="evidence" value="ECO:0007669"/>
    <property type="project" value="UniProtKB-UniRule"/>
</dbReference>
<dbReference type="GO" id="GO:0000028">
    <property type="term" value="P:ribosomal small subunit assembly"/>
    <property type="evidence" value="ECO:0007669"/>
    <property type="project" value="TreeGrafter"/>
</dbReference>
<dbReference type="CDD" id="cd04163">
    <property type="entry name" value="Era"/>
    <property type="match status" value="1"/>
</dbReference>
<dbReference type="CDD" id="cd22534">
    <property type="entry name" value="KH-II_Era"/>
    <property type="match status" value="1"/>
</dbReference>
<dbReference type="FunFam" id="3.30.300.20:FF:000003">
    <property type="entry name" value="GTPase Era"/>
    <property type="match status" value="1"/>
</dbReference>
<dbReference type="FunFam" id="3.40.50.300:FF:000094">
    <property type="entry name" value="GTPase Era"/>
    <property type="match status" value="1"/>
</dbReference>
<dbReference type="Gene3D" id="3.30.300.20">
    <property type="match status" value="1"/>
</dbReference>
<dbReference type="Gene3D" id="3.40.50.300">
    <property type="entry name" value="P-loop containing nucleotide triphosphate hydrolases"/>
    <property type="match status" value="1"/>
</dbReference>
<dbReference type="HAMAP" id="MF_00367">
    <property type="entry name" value="GTPase_Era"/>
    <property type="match status" value="1"/>
</dbReference>
<dbReference type="InterPro" id="IPR030388">
    <property type="entry name" value="G_ERA_dom"/>
</dbReference>
<dbReference type="InterPro" id="IPR006073">
    <property type="entry name" value="GTP-bd"/>
</dbReference>
<dbReference type="InterPro" id="IPR005662">
    <property type="entry name" value="GTPase_Era-like"/>
</dbReference>
<dbReference type="InterPro" id="IPR015946">
    <property type="entry name" value="KH_dom-like_a/b"/>
</dbReference>
<dbReference type="InterPro" id="IPR004044">
    <property type="entry name" value="KH_dom_type_2"/>
</dbReference>
<dbReference type="InterPro" id="IPR009019">
    <property type="entry name" value="KH_sf_prok-type"/>
</dbReference>
<dbReference type="InterPro" id="IPR027417">
    <property type="entry name" value="P-loop_NTPase"/>
</dbReference>
<dbReference type="InterPro" id="IPR005225">
    <property type="entry name" value="Small_GTP-bd"/>
</dbReference>
<dbReference type="NCBIfam" id="TIGR00436">
    <property type="entry name" value="era"/>
    <property type="match status" value="1"/>
</dbReference>
<dbReference type="NCBIfam" id="NF000908">
    <property type="entry name" value="PRK00089.1"/>
    <property type="match status" value="1"/>
</dbReference>
<dbReference type="NCBIfam" id="TIGR00231">
    <property type="entry name" value="small_GTP"/>
    <property type="match status" value="1"/>
</dbReference>
<dbReference type="PANTHER" id="PTHR42698">
    <property type="entry name" value="GTPASE ERA"/>
    <property type="match status" value="1"/>
</dbReference>
<dbReference type="PANTHER" id="PTHR42698:SF1">
    <property type="entry name" value="GTPASE ERA, MITOCHONDRIAL"/>
    <property type="match status" value="1"/>
</dbReference>
<dbReference type="Pfam" id="PF07650">
    <property type="entry name" value="KH_2"/>
    <property type="match status" value="1"/>
</dbReference>
<dbReference type="Pfam" id="PF01926">
    <property type="entry name" value="MMR_HSR1"/>
    <property type="match status" value="1"/>
</dbReference>
<dbReference type="PRINTS" id="PR00326">
    <property type="entry name" value="GTP1OBG"/>
</dbReference>
<dbReference type="SUPFAM" id="SSF52540">
    <property type="entry name" value="P-loop containing nucleoside triphosphate hydrolases"/>
    <property type="match status" value="1"/>
</dbReference>
<dbReference type="SUPFAM" id="SSF54814">
    <property type="entry name" value="Prokaryotic type KH domain (KH-domain type II)"/>
    <property type="match status" value="1"/>
</dbReference>
<dbReference type="PROSITE" id="PS51713">
    <property type="entry name" value="G_ERA"/>
    <property type="match status" value="1"/>
</dbReference>
<dbReference type="PROSITE" id="PS50823">
    <property type="entry name" value="KH_TYPE_2"/>
    <property type="match status" value="1"/>
</dbReference>